<feature type="chain" id="PRO_1000084253" description="3-isopropylmalate dehydratase small subunit">
    <location>
        <begin position="1"/>
        <end position="207"/>
    </location>
</feature>
<evidence type="ECO:0000255" key="1">
    <source>
        <dbReference type="HAMAP-Rule" id="MF_01031"/>
    </source>
</evidence>
<protein>
    <recommendedName>
        <fullName evidence="1">3-isopropylmalate dehydratase small subunit</fullName>
        <ecNumber evidence="1">4.2.1.33</ecNumber>
    </recommendedName>
    <alternativeName>
        <fullName evidence="1">Alpha-IPM isomerase</fullName>
        <shortName evidence="1">IPMI</shortName>
    </alternativeName>
    <alternativeName>
        <fullName evidence="1">Isopropylmalate isomerase</fullName>
    </alternativeName>
</protein>
<comment type="function">
    <text evidence="1">Catalyzes the isomerization between 2-isopropylmalate and 3-isopropylmalate, via the formation of 2-isopropylmaleate.</text>
</comment>
<comment type="catalytic activity">
    <reaction evidence="1">
        <text>(2R,3S)-3-isopropylmalate = (2S)-2-isopropylmalate</text>
        <dbReference type="Rhea" id="RHEA:32287"/>
        <dbReference type="ChEBI" id="CHEBI:1178"/>
        <dbReference type="ChEBI" id="CHEBI:35121"/>
        <dbReference type="EC" id="4.2.1.33"/>
    </reaction>
</comment>
<comment type="pathway">
    <text evidence="1">Amino-acid biosynthesis; L-leucine biosynthesis; L-leucine from 3-methyl-2-oxobutanoate: step 2/4.</text>
</comment>
<comment type="subunit">
    <text evidence="1">Heterodimer of LeuC and LeuD.</text>
</comment>
<comment type="similarity">
    <text evidence="1">Belongs to the LeuD family. LeuD type 1 subfamily.</text>
</comment>
<gene>
    <name evidence="1" type="primary">leuD</name>
    <name type="ordered locus">GDI3086</name>
    <name type="ordered locus">Gdia_3281</name>
</gene>
<accession>A9HS54</accession>
<accession>B5ZL66</accession>
<reference key="1">
    <citation type="journal article" date="2009" name="BMC Genomics">
        <title>Complete genome sequence of the sugarcane nitrogen-fixing endophyte Gluconacetobacter diazotrophicus Pal5.</title>
        <authorList>
            <person name="Bertalan M."/>
            <person name="Albano R."/>
            <person name="de Padua V."/>
            <person name="Rouws L."/>
            <person name="Rojas C."/>
            <person name="Hemerly A."/>
            <person name="Teixeira K."/>
            <person name="Schwab S."/>
            <person name="Araujo J."/>
            <person name="Oliveira A."/>
            <person name="Franca L."/>
            <person name="Magalhaes V."/>
            <person name="Alqueres S."/>
            <person name="Cardoso A."/>
            <person name="Almeida W."/>
            <person name="Loureiro M.M."/>
            <person name="Nogueira E."/>
            <person name="Cidade D."/>
            <person name="Oliveira D."/>
            <person name="Simao T."/>
            <person name="Macedo J."/>
            <person name="Valadao A."/>
            <person name="Dreschsel M."/>
            <person name="Freitas F."/>
            <person name="Vidal M."/>
            <person name="Guedes H."/>
            <person name="Rodrigues E."/>
            <person name="Meneses C."/>
            <person name="Brioso P."/>
            <person name="Pozzer L."/>
            <person name="Figueiredo D."/>
            <person name="Montano H."/>
            <person name="Junior J."/>
            <person name="de Souza Filho G."/>
            <person name="Martin Quintana Flores V."/>
            <person name="Ferreira B."/>
            <person name="Branco A."/>
            <person name="Gonzalez P."/>
            <person name="Guillobel H."/>
            <person name="Lemos M."/>
            <person name="Seibel L."/>
            <person name="Macedo J."/>
            <person name="Alves-Ferreira M."/>
            <person name="Sachetto-Martins G."/>
            <person name="Coelho A."/>
            <person name="Santos E."/>
            <person name="Amaral G."/>
            <person name="Neves A."/>
            <person name="Pacheco A.B."/>
            <person name="Carvalho D."/>
            <person name="Lery L."/>
            <person name="Bisch P."/>
            <person name="Rossle S.C."/>
            <person name="Urmenyi T."/>
            <person name="Rael Pereira A."/>
            <person name="Silva R."/>
            <person name="Rondinelli E."/>
            <person name="von Kruger W."/>
            <person name="Martins O."/>
            <person name="Baldani J.I."/>
            <person name="Ferreira P.C."/>
        </authorList>
    </citation>
    <scope>NUCLEOTIDE SEQUENCE [LARGE SCALE GENOMIC DNA]</scope>
    <source>
        <strain>ATCC 49037 / DSM 5601 / CCUG 37298 / CIP 103539 / LMG 7603 / PAl5</strain>
    </source>
</reference>
<reference key="2">
    <citation type="journal article" date="2010" name="Stand. Genomic Sci.">
        <title>Two genome sequences of the same bacterial strain, Gluconacetobacter diazotrophicus PAl 5, suggest a new standard in genome sequence submission.</title>
        <authorList>
            <person name="Giongo A."/>
            <person name="Tyler H.L."/>
            <person name="Zipperer U.N."/>
            <person name="Triplett E.W."/>
        </authorList>
    </citation>
    <scope>NUCLEOTIDE SEQUENCE [LARGE SCALE GENOMIC DNA]</scope>
    <source>
        <strain>ATCC 49037 / DSM 5601 / CCUG 37298 / CIP 103539 / LMG 7603 / PAl5</strain>
    </source>
</reference>
<name>LEUD_GLUDA</name>
<sequence>MEKFTVLTAIAAPLPEANIDTDKIIPARFLKTTKRSGLGVHAFDGMRYNPDGSEKPDFVLNQAPYRQAGILITYDNLGCGSSREHAPWALLDFGIRCVIAPSFADIFFNNCFKNGILPIRLPREVCDALMDDARLGGNGRLTVDLERQVVIRPDGAEIAFEIDPLRRHLLLEGLDDIGQTLQHEGAIDTFEATRERAQPWQTRIVID</sequence>
<proteinExistence type="inferred from homology"/>
<organism>
    <name type="scientific">Gluconacetobacter diazotrophicus (strain ATCC 49037 / DSM 5601 / CCUG 37298 / CIP 103539 / LMG 7603 / PAl5)</name>
    <dbReference type="NCBI Taxonomy" id="272568"/>
    <lineage>
        <taxon>Bacteria</taxon>
        <taxon>Pseudomonadati</taxon>
        <taxon>Pseudomonadota</taxon>
        <taxon>Alphaproteobacteria</taxon>
        <taxon>Acetobacterales</taxon>
        <taxon>Acetobacteraceae</taxon>
        <taxon>Gluconacetobacter</taxon>
    </lineage>
</organism>
<dbReference type="EC" id="4.2.1.33" evidence="1"/>
<dbReference type="EMBL" id="AM889285">
    <property type="protein sequence ID" value="CAP57029.1"/>
    <property type="molecule type" value="Genomic_DNA"/>
</dbReference>
<dbReference type="EMBL" id="CP001189">
    <property type="protein sequence ID" value="ACI53008.1"/>
    <property type="molecule type" value="Genomic_DNA"/>
</dbReference>
<dbReference type="RefSeq" id="WP_012227438.1">
    <property type="nucleotide sequence ID" value="NC_010125.1"/>
</dbReference>
<dbReference type="SMR" id="A9HS54"/>
<dbReference type="STRING" id="272568.GDI3086"/>
<dbReference type="KEGG" id="gdi:GDI3086"/>
<dbReference type="KEGG" id="gdj:Gdia_3281"/>
<dbReference type="eggNOG" id="COG0066">
    <property type="taxonomic scope" value="Bacteria"/>
</dbReference>
<dbReference type="HOGENOM" id="CLU_081378_0_3_5"/>
<dbReference type="OrthoDB" id="9777465at2"/>
<dbReference type="UniPathway" id="UPA00048">
    <property type="reaction ID" value="UER00071"/>
</dbReference>
<dbReference type="Proteomes" id="UP000001176">
    <property type="component" value="Chromosome"/>
</dbReference>
<dbReference type="GO" id="GO:0009316">
    <property type="term" value="C:3-isopropylmalate dehydratase complex"/>
    <property type="evidence" value="ECO:0007669"/>
    <property type="project" value="InterPro"/>
</dbReference>
<dbReference type="GO" id="GO:0003861">
    <property type="term" value="F:3-isopropylmalate dehydratase activity"/>
    <property type="evidence" value="ECO:0007669"/>
    <property type="project" value="UniProtKB-UniRule"/>
</dbReference>
<dbReference type="GO" id="GO:0009098">
    <property type="term" value="P:L-leucine biosynthetic process"/>
    <property type="evidence" value="ECO:0007669"/>
    <property type="project" value="UniProtKB-UniRule"/>
</dbReference>
<dbReference type="CDD" id="cd01577">
    <property type="entry name" value="IPMI_Swivel"/>
    <property type="match status" value="1"/>
</dbReference>
<dbReference type="FunFam" id="3.20.19.10:FF:000003">
    <property type="entry name" value="3-isopropylmalate dehydratase small subunit"/>
    <property type="match status" value="1"/>
</dbReference>
<dbReference type="Gene3D" id="3.20.19.10">
    <property type="entry name" value="Aconitase, domain 4"/>
    <property type="match status" value="1"/>
</dbReference>
<dbReference type="HAMAP" id="MF_01031">
    <property type="entry name" value="LeuD_type1"/>
    <property type="match status" value="1"/>
</dbReference>
<dbReference type="InterPro" id="IPR004431">
    <property type="entry name" value="3-IsopropMal_deHydase_ssu"/>
</dbReference>
<dbReference type="InterPro" id="IPR015928">
    <property type="entry name" value="Aconitase/3IPM_dehydase_swvl"/>
</dbReference>
<dbReference type="InterPro" id="IPR000573">
    <property type="entry name" value="AconitaseA/IPMdHydase_ssu_swvl"/>
</dbReference>
<dbReference type="InterPro" id="IPR033940">
    <property type="entry name" value="IPMI_Swivel"/>
</dbReference>
<dbReference type="InterPro" id="IPR050075">
    <property type="entry name" value="LeuD"/>
</dbReference>
<dbReference type="NCBIfam" id="TIGR00171">
    <property type="entry name" value="leuD"/>
    <property type="match status" value="1"/>
</dbReference>
<dbReference type="NCBIfam" id="NF002458">
    <property type="entry name" value="PRK01641.1"/>
    <property type="match status" value="1"/>
</dbReference>
<dbReference type="PANTHER" id="PTHR43345:SF5">
    <property type="entry name" value="3-ISOPROPYLMALATE DEHYDRATASE SMALL SUBUNIT"/>
    <property type="match status" value="1"/>
</dbReference>
<dbReference type="PANTHER" id="PTHR43345">
    <property type="entry name" value="3-ISOPROPYLMALATE DEHYDRATASE SMALL SUBUNIT 2-RELATED-RELATED"/>
    <property type="match status" value="1"/>
</dbReference>
<dbReference type="Pfam" id="PF00694">
    <property type="entry name" value="Aconitase_C"/>
    <property type="match status" value="1"/>
</dbReference>
<dbReference type="SUPFAM" id="SSF52016">
    <property type="entry name" value="LeuD/IlvD-like"/>
    <property type="match status" value="1"/>
</dbReference>
<keyword id="KW-0028">Amino-acid biosynthesis</keyword>
<keyword id="KW-0100">Branched-chain amino acid biosynthesis</keyword>
<keyword id="KW-0432">Leucine biosynthesis</keyword>
<keyword id="KW-0456">Lyase</keyword>
<keyword id="KW-1185">Reference proteome</keyword>